<sequence>MYDVTEWKHVFKLDPNKEISDEQLEAICESGTDAILIGGSDNVTEDNVLQLMSKVRRFLVPCVLEISTHEMIVPGFDLYFIPTVLNSSHPDWIVGLHKDAMKEFGDLMSMEEIVPEGYVILNEECKAAKLTEANTALDIDDVRAYARVAEHLMKLPIFYLEYSGTLGDIELVKETKAVLSDTVLFYGGGIENAKQAEDFAQHADVVVVGNVIYDNFKEALKTVSAVKKSS</sequence>
<gene>
    <name evidence="1" type="primary">pcrB</name>
    <name type="ordered locus">BPUM_0624</name>
</gene>
<organism>
    <name type="scientific">Bacillus pumilus (strain SAFR-032)</name>
    <dbReference type="NCBI Taxonomy" id="315750"/>
    <lineage>
        <taxon>Bacteria</taxon>
        <taxon>Bacillati</taxon>
        <taxon>Bacillota</taxon>
        <taxon>Bacilli</taxon>
        <taxon>Bacillales</taxon>
        <taxon>Bacillaceae</taxon>
        <taxon>Bacillus</taxon>
    </lineage>
</organism>
<name>PCRB_BACP2</name>
<protein>
    <recommendedName>
        <fullName evidence="1">Heptaprenylglyceryl phosphate synthase</fullName>
        <shortName evidence="1">HepGP synthase</shortName>
        <ecNumber evidence="1">2.5.1.n9</ecNumber>
    </recommendedName>
    <alternativeName>
        <fullName evidence="1">Glycerol-1-phosphate heptaprenyltransferase</fullName>
    </alternativeName>
</protein>
<reference key="1">
    <citation type="journal article" date="2007" name="PLoS ONE">
        <title>Paradoxical DNA repair and peroxide resistance gene conservation in Bacillus pumilus SAFR-032.</title>
        <authorList>
            <person name="Gioia J."/>
            <person name="Yerrapragada S."/>
            <person name="Qin X."/>
            <person name="Jiang H."/>
            <person name="Igboeli O.C."/>
            <person name="Muzny D."/>
            <person name="Dugan-Rocha S."/>
            <person name="Ding Y."/>
            <person name="Hawes A."/>
            <person name="Liu W."/>
            <person name="Perez L."/>
            <person name="Kovar C."/>
            <person name="Dinh H."/>
            <person name="Lee S."/>
            <person name="Nazareth L."/>
            <person name="Blyth P."/>
            <person name="Holder M."/>
            <person name="Buhay C."/>
            <person name="Tirumalai M.R."/>
            <person name="Liu Y."/>
            <person name="Dasgupta I."/>
            <person name="Bokhetache L."/>
            <person name="Fujita M."/>
            <person name="Karouia F."/>
            <person name="Eswara Moorthy P."/>
            <person name="Siefert J."/>
            <person name="Uzman A."/>
            <person name="Buzumbo P."/>
            <person name="Verma A."/>
            <person name="Zwiya H."/>
            <person name="McWilliams B.D."/>
            <person name="Olowu A."/>
            <person name="Clinkenbeard K.D."/>
            <person name="Newcombe D."/>
            <person name="Golebiewski L."/>
            <person name="Petrosino J.F."/>
            <person name="Nicholson W.L."/>
            <person name="Fox G.E."/>
            <person name="Venkateswaran K."/>
            <person name="Highlander S.K."/>
            <person name="Weinstock G.M."/>
        </authorList>
    </citation>
    <scope>NUCLEOTIDE SEQUENCE [LARGE SCALE GENOMIC DNA]</scope>
    <source>
        <strain>SAFR-032</strain>
    </source>
</reference>
<reference key="2">
    <citation type="journal article" date="2016" name="PLoS ONE">
        <title>Bacillus pumilus SAFR-032 Genome Revisited: Sequence Update and Re-Annotation.</title>
        <authorList>
            <person name="Stepanov V.G."/>
            <person name="Tirumalai M.R."/>
            <person name="Montazari S."/>
            <person name="Checinska A."/>
            <person name="Venkateswaran K."/>
            <person name="Fox G.E."/>
        </authorList>
    </citation>
    <scope>SEQUENCE REVISION TO N-TERMINUS</scope>
    <source>
        <strain>SAFR-032</strain>
    </source>
</reference>
<dbReference type="EC" id="2.5.1.n9" evidence="1"/>
<dbReference type="EMBL" id="CP000813">
    <property type="protein sequence ID" value="ABV61316.2"/>
    <property type="molecule type" value="Genomic_DNA"/>
</dbReference>
<dbReference type="RefSeq" id="WP_041816135.1">
    <property type="nucleotide sequence ID" value="NZ_VEIS01000001.1"/>
</dbReference>
<dbReference type="SMR" id="A8FAP9"/>
<dbReference type="STRING" id="315750.BPUM_0624"/>
<dbReference type="GeneID" id="5619872"/>
<dbReference type="KEGG" id="bpu:BPUM_0624"/>
<dbReference type="eggNOG" id="COG1646">
    <property type="taxonomic scope" value="Bacteria"/>
</dbReference>
<dbReference type="HOGENOM" id="CLU_095211_0_0_9"/>
<dbReference type="OrthoDB" id="2381757at2"/>
<dbReference type="UniPathway" id="UPA00940"/>
<dbReference type="Proteomes" id="UP000001355">
    <property type="component" value="Chromosome"/>
</dbReference>
<dbReference type="GO" id="GO:0120536">
    <property type="term" value="F:heptaprenylglyceryl phosphate synthase activity"/>
    <property type="evidence" value="ECO:0007669"/>
    <property type="project" value="RHEA"/>
</dbReference>
<dbReference type="GO" id="GO:0000287">
    <property type="term" value="F:magnesium ion binding"/>
    <property type="evidence" value="ECO:0007669"/>
    <property type="project" value="UniProtKB-UniRule"/>
</dbReference>
<dbReference type="GO" id="GO:0046474">
    <property type="term" value="P:glycerophospholipid biosynthetic process"/>
    <property type="evidence" value="ECO:0007669"/>
    <property type="project" value="UniProtKB-UniRule"/>
</dbReference>
<dbReference type="CDD" id="cd02812">
    <property type="entry name" value="PcrB_like"/>
    <property type="match status" value="1"/>
</dbReference>
<dbReference type="FunFam" id="3.20.20.390:FF:000001">
    <property type="entry name" value="Heptaprenylglyceryl phosphate synthase"/>
    <property type="match status" value="1"/>
</dbReference>
<dbReference type="Gene3D" id="3.20.20.390">
    <property type="entry name" value="FMN-linked oxidoreductases"/>
    <property type="match status" value="1"/>
</dbReference>
<dbReference type="HAMAP" id="MF_00112">
    <property type="entry name" value="GGGP_HepGP_synthase"/>
    <property type="match status" value="1"/>
</dbReference>
<dbReference type="InterPro" id="IPR039074">
    <property type="entry name" value="GGGP/HepGP_synthase_I"/>
</dbReference>
<dbReference type="InterPro" id="IPR038597">
    <property type="entry name" value="GGGP/HepGP_synthase_sf"/>
</dbReference>
<dbReference type="InterPro" id="IPR008205">
    <property type="entry name" value="GGGP_HepGP_synthase"/>
</dbReference>
<dbReference type="NCBIfam" id="TIGR01768">
    <property type="entry name" value="GGGP-family"/>
    <property type="match status" value="1"/>
</dbReference>
<dbReference type="NCBIfam" id="NF003197">
    <property type="entry name" value="PRK04169.1-1"/>
    <property type="match status" value="1"/>
</dbReference>
<dbReference type="NCBIfam" id="NF003199">
    <property type="entry name" value="PRK04169.1-3"/>
    <property type="match status" value="1"/>
</dbReference>
<dbReference type="PANTHER" id="PTHR40029">
    <property type="match status" value="1"/>
</dbReference>
<dbReference type="PANTHER" id="PTHR40029:SF2">
    <property type="entry name" value="HEPTAPRENYLGLYCERYL PHOSPHATE SYNTHASE"/>
    <property type="match status" value="1"/>
</dbReference>
<dbReference type="Pfam" id="PF01884">
    <property type="entry name" value="PcrB"/>
    <property type="match status" value="1"/>
</dbReference>
<dbReference type="SUPFAM" id="SSF51395">
    <property type="entry name" value="FMN-linked oxidoreductases"/>
    <property type="match status" value="1"/>
</dbReference>
<accession>A8FAP9</accession>
<keyword id="KW-0444">Lipid biosynthesis</keyword>
<keyword id="KW-0443">Lipid metabolism</keyword>
<keyword id="KW-0460">Magnesium</keyword>
<keyword id="KW-0479">Metal-binding</keyword>
<keyword id="KW-0594">Phospholipid biosynthesis</keyword>
<keyword id="KW-1208">Phospholipid metabolism</keyword>
<keyword id="KW-0808">Transferase</keyword>
<comment type="function">
    <text evidence="1">Prenyltransferase that catalyzes in vivo the transfer of the heptaprenyl moiety of heptaprenyl pyrophosphate (HepPP; 35 carbon atoms) to the C3 hydroxyl of sn-glycerol-1-phosphate (G1P), producing heptaprenylglyceryl phosphate (HepGP). This reaction is an ether-bond-formation step in the biosynthesis of archaea-type G1P-based membrane lipids found in Bacillales.</text>
</comment>
<comment type="catalytic activity">
    <reaction evidence="1">
        <text>sn-glycerol 1-phosphate + all-trans-heptaprenyl diphosphate = 3-heptaprenyl-sn-glycero-1-phosphate + diphosphate</text>
        <dbReference type="Rhea" id="RHEA:33495"/>
        <dbReference type="ChEBI" id="CHEBI:33019"/>
        <dbReference type="ChEBI" id="CHEBI:57685"/>
        <dbReference type="ChEBI" id="CHEBI:58206"/>
        <dbReference type="ChEBI" id="CHEBI:64781"/>
        <dbReference type="EC" id="2.5.1.n9"/>
    </reaction>
</comment>
<comment type="cofactor">
    <cofactor evidence="1">
        <name>Mg(2+)</name>
        <dbReference type="ChEBI" id="CHEBI:18420"/>
    </cofactor>
</comment>
<comment type="pathway">
    <text evidence="1">Membrane lipid metabolism; glycerophospholipid metabolism.</text>
</comment>
<comment type="subunit">
    <text evidence="1">Homodimer.</text>
</comment>
<comment type="similarity">
    <text evidence="1">Belongs to the GGGP/HepGP synthase family. Group I subfamily.</text>
</comment>
<feature type="chain" id="PRO_0000350666" description="Heptaprenylglyceryl phosphate synthase">
    <location>
        <begin position="1"/>
        <end position="230"/>
    </location>
</feature>
<feature type="binding site" evidence="1">
    <location>
        <position position="12"/>
    </location>
    <ligand>
        <name>sn-glycerol 1-phosphate</name>
        <dbReference type="ChEBI" id="CHEBI:57685"/>
    </ligand>
</feature>
<feature type="binding site" evidence="1">
    <location>
        <position position="14"/>
    </location>
    <ligand>
        <name>Mg(2+)</name>
        <dbReference type="ChEBI" id="CHEBI:18420"/>
    </ligand>
</feature>
<feature type="binding site" evidence="1">
    <location>
        <position position="40"/>
    </location>
    <ligand>
        <name>Mg(2+)</name>
        <dbReference type="ChEBI" id="CHEBI:18420"/>
    </ligand>
</feature>
<feature type="binding site" evidence="1">
    <location>
        <begin position="159"/>
        <end position="164"/>
    </location>
    <ligand>
        <name>sn-glycerol 1-phosphate</name>
        <dbReference type="ChEBI" id="CHEBI:57685"/>
    </ligand>
</feature>
<feature type="binding site" evidence="1">
    <location>
        <position position="189"/>
    </location>
    <ligand>
        <name>sn-glycerol 1-phosphate</name>
        <dbReference type="ChEBI" id="CHEBI:57685"/>
    </ligand>
</feature>
<feature type="binding site" evidence="1">
    <location>
        <begin position="209"/>
        <end position="210"/>
    </location>
    <ligand>
        <name>sn-glycerol 1-phosphate</name>
        <dbReference type="ChEBI" id="CHEBI:57685"/>
    </ligand>
</feature>
<proteinExistence type="inferred from homology"/>
<evidence type="ECO:0000255" key="1">
    <source>
        <dbReference type="HAMAP-Rule" id="MF_00112"/>
    </source>
</evidence>